<protein>
    <recommendedName>
        <fullName evidence="1">Large ribosomal subunit protein bL20</fullName>
    </recommendedName>
    <alternativeName>
        <fullName evidence="2">50S ribosomal protein L20</fullName>
    </alternativeName>
</protein>
<reference key="1">
    <citation type="journal article" date="2008" name="J. Bacteriol.">
        <title>Genome sequence of the streptomycin-producing microorganism Streptomyces griseus IFO 13350.</title>
        <authorList>
            <person name="Ohnishi Y."/>
            <person name="Ishikawa J."/>
            <person name="Hara H."/>
            <person name="Suzuki H."/>
            <person name="Ikenoya M."/>
            <person name="Ikeda H."/>
            <person name="Yamashita A."/>
            <person name="Hattori M."/>
            <person name="Horinouchi S."/>
        </authorList>
    </citation>
    <scope>NUCLEOTIDE SEQUENCE [LARGE SCALE GENOMIC DNA]</scope>
    <source>
        <strain>JCM 4626 / CBS 651.72 / NBRC 13350 / KCC S-0626 / ISP 5235</strain>
    </source>
</reference>
<proteinExistence type="inferred from homology"/>
<gene>
    <name evidence="1" type="primary">rplT</name>
    <name type="ordered locus">SGR_5907</name>
</gene>
<organism>
    <name type="scientific">Streptomyces griseus subsp. griseus (strain JCM 4626 / CBS 651.72 / NBRC 13350 / KCC S-0626 / ISP 5235)</name>
    <dbReference type="NCBI Taxonomy" id="455632"/>
    <lineage>
        <taxon>Bacteria</taxon>
        <taxon>Bacillati</taxon>
        <taxon>Actinomycetota</taxon>
        <taxon>Actinomycetes</taxon>
        <taxon>Kitasatosporales</taxon>
        <taxon>Streptomycetaceae</taxon>
        <taxon>Streptomyces</taxon>
    </lineage>
</organism>
<comment type="function">
    <text evidence="1">Binds directly to 23S ribosomal RNA and is necessary for the in vitro assembly process of the 50S ribosomal subunit. It is not involved in the protein synthesizing functions of that subunit.</text>
</comment>
<comment type="similarity">
    <text evidence="1">Belongs to the bacterial ribosomal protein bL20 family.</text>
</comment>
<name>RL20_STRGG</name>
<feature type="chain" id="PRO_1000122375" description="Large ribosomal subunit protein bL20">
    <location>
        <begin position="1"/>
        <end position="127"/>
    </location>
</feature>
<keyword id="KW-0687">Ribonucleoprotein</keyword>
<keyword id="KW-0689">Ribosomal protein</keyword>
<keyword id="KW-0694">RNA-binding</keyword>
<keyword id="KW-0699">rRNA-binding</keyword>
<evidence type="ECO:0000255" key="1">
    <source>
        <dbReference type="HAMAP-Rule" id="MF_00382"/>
    </source>
</evidence>
<evidence type="ECO:0000305" key="2"/>
<sequence>MARVKRAVNAHKKRRAILEAASGYRGQRSRLYRKAKEQVTHSLVYNYNDRKKRKGDFRQLWIQRINAAARQNGMTYNRLIQGLKAANIEVDRKILAELAVNDANAFAALVEVAQKALPSDVNAPKAA</sequence>
<dbReference type="EMBL" id="AP009493">
    <property type="protein sequence ID" value="BAG22736.1"/>
    <property type="molecule type" value="Genomic_DNA"/>
</dbReference>
<dbReference type="RefSeq" id="WP_003970214.1">
    <property type="nucleotide sequence ID" value="NC_010572.1"/>
</dbReference>
<dbReference type="SMR" id="B1W354"/>
<dbReference type="GeneID" id="96292655"/>
<dbReference type="KEGG" id="sgr:SGR_5907"/>
<dbReference type="eggNOG" id="COG0292">
    <property type="taxonomic scope" value="Bacteria"/>
</dbReference>
<dbReference type="HOGENOM" id="CLU_123265_0_0_11"/>
<dbReference type="Proteomes" id="UP000001685">
    <property type="component" value="Chromosome"/>
</dbReference>
<dbReference type="GO" id="GO:1990904">
    <property type="term" value="C:ribonucleoprotein complex"/>
    <property type="evidence" value="ECO:0007669"/>
    <property type="project" value="UniProtKB-KW"/>
</dbReference>
<dbReference type="GO" id="GO:0005840">
    <property type="term" value="C:ribosome"/>
    <property type="evidence" value="ECO:0007669"/>
    <property type="project" value="UniProtKB-KW"/>
</dbReference>
<dbReference type="GO" id="GO:0019843">
    <property type="term" value="F:rRNA binding"/>
    <property type="evidence" value="ECO:0007669"/>
    <property type="project" value="UniProtKB-UniRule"/>
</dbReference>
<dbReference type="GO" id="GO:0003735">
    <property type="term" value="F:structural constituent of ribosome"/>
    <property type="evidence" value="ECO:0007669"/>
    <property type="project" value="InterPro"/>
</dbReference>
<dbReference type="GO" id="GO:0000027">
    <property type="term" value="P:ribosomal large subunit assembly"/>
    <property type="evidence" value="ECO:0007669"/>
    <property type="project" value="UniProtKB-UniRule"/>
</dbReference>
<dbReference type="GO" id="GO:0006412">
    <property type="term" value="P:translation"/>
    <property type="evidence" value="ECO:0007669"/>
    <property type="project" value="InterPro"/>
</dbReference>
<dbReference type="CDD" id="cd07026">
    <property type="entry name" value="Ribosomal_L20"/>
    <property type="match status" value="1"/>
</dbReference>
<dbReference type="FunFam" id="1.10.1900.20:FF:000001">
    <property type="entry name" value="50S ribosomal protein L20"/>
    <property type="match status" value="1"/>
</dbReference>
<dbReference type="Gene3D" id="6.10.160.10">
    <property type="match status" value="1"/>
</dbReference>
<dbReference type="Gene3D" id="1.10.1900.20">
    <property type="entry name" value="Ribosomal protein L20"/>
    <property type="match status" value="1"/>
</dbReference>
<dbReference type="HAMAP" id="MF_00382">
    <property type="entry name" value="Ribosomal_bL20"/>
    <property type="match status" value="1"/>
</dbReference>
<dbReference type="InterPro" id="IPR005813">
    <property type="entry name" value="Ribosomal_bL20"/>
</dbReference>
<dbReference type="InterPro" id="IPR049946">
    <property type="entry name" value="RIBOSOMAL_L20_CS"/>
</dbReference>
<dbReference type="InterPro" id="IPR035566">
    <property type="entry name" value="Ribosomal_protein_bL20_C"/>
</dbReference>
<dbReference type="NCBIfam" id="TIGR01032">
    <property type="entry name" value="rplT_bact"/>
    <property type="match status" value="1"/>
</dbReference>
<dbReference type="PANTHER" id="PTHR10986">
    <property type="entry name" value="39S RIBOSOMAL PROTEIN L20"/>
    <property type="match status" value="1"/>
</dbReference>
<dbReference type="Pfam" id="PF00453">
    <property type="entry name" value="Ribosomal_L20"/>
    <property type="match status" value="1"/>
</dbReference>
<dbReference type="PRINTS" id="PR00062">
    <property type="entry name" value="RIBOSOMALL20"/>
</dbReference>
<dbReference type="SUPFAM" id="SSF74731">
    <property type="entry name" value="Ribosomal protein L20"/>
    <property type="match status" value="1"/>
</dbReference>
<dbReference type="PROSITE" id="PS00937">
    <property type="entry name" value="RIBOSOMAL_L20"/>
    <property type="match status" value="1"/>
</dbReference>
<accession>B1W354</accession>